<reference key="1">
    <citation type="submission" date="2002-02" db="EMBL/GenBank/DDBJ databases">
        <title>Cloning and sequencing of guinea pig amylin, calcitonin, CGRP and adrenomedullin receptor subunits.</title>
        <authorList>
            <person name="Derst C."/>
            <person name="Preisig-Mueller R."/>
            <person name="Daut J."/>
        </authorList>
    </citation>
    <scope>NUCLEOTIDE SEQUENCE [MRNA]</scope>
</reference>
<keyword id="KW-1003">Cell membrane</keyword>
<keyword id="KW-1015">Disulfide bond</keyword>
<keyword id="KW-0472">Membrane</keyword>
<keyword id="KW-0675">Receptor</keyword>
<keyword id="KW-1185">Reference proteome</keyword>
<keyword id="KW-0732">Signal</keyword>
<keyword id="KW-0812">Transmembrane</keyword>
<keyword id="KW-1133">Transmembrane helix</keyword>
<keyword id="KW-0813">Transport</keyword>
<proteinExistence type="evidence at protein level"/>
<dbReference type="EMBL" id="AF484219">
    <property type="protein sequence ID" value="AAL91558.1"/>
    <property type="molecule type" value="mRNA"/>
</dbReference>
<dbReference type="RefSeq" id="NP_001166480.1">
    <property type="nucleotide sequence ID" value="NM_001173009.1"/>
</dbReference>
<dbReference type="SMR" id="Q8R4C6"/>
<dbReference type="FunCoup" id="Q8R4C6">
    <property type="interactions" value="117"/>
</dbReference>
<dbReference type="STRING" id="10141.ENSCPOP00000020178"/>
<dbReference type="Ensembl" id="ENSCPOT00000020782.2">
    <property type="protein sequence ID" value="ENSCPOP00000020178.1"/>
    <property type="gene ID" value="ENSCPOG00000026974.2"/>
</dbReference>
<dbReference type="GeneID" id="100135610"/>
<dbReference type="KEGG" id="cpoc:100135610"/>
<dbReference type="CTD" id="10267"/>
<dbReference type="VEuPathDB" id="HostDB:ENSCPOG00000026974"/>
<dbReference type="eggNOG" id="ENOG502S0TC">
    <property type="taxonomic scope" value="Eukaryota"/>
</dbReference>
<dbReference type="GeneTree" id="ENSGT00940000159224"/>
<dbReference type="HOGENOM" id="CLU_116349_3_0_1"/>
<dbReference type="InParanoid" id="Q8R4C6"/>
<dbReference type="OMA" id="CYWPNRM"/>
<dbReference type="OrthoDB" id="10007519at2759"/>
<dbReference type="TreeFam" id="TF333286"/>
<dbReference type="Proteomes" id="UP000005447">
    <property type="component" value="Unassembled WGS sequence"/>
</dbReference>
<dbReference type="Bgee" id="ENSCPOG00000026974">
    <property type="expression patterns" value="Expressed in hypothalamus and 13 other cell types or tissues"/>
</dbReference>
<dbReference type="GO" id="GO:0009986">
    <property type="term" value="C:cell surface"/>
    <property type="evidence" value="ECO:0007669"/>
    <property type="project" value="Ensembl"/>
</dbReference>
<dbReference type="GO" id="GO:1990406">
    <property type="term" value="C:CGRP receptor complex"/>
    <property type="evidence" value="ECO:0007669"/>
    <property type="project" value="Ensembl"/>
</dbReference>
<dbReference type="GO" id="GO:0097643">
    <property type="term" value="F:amylin receptor activity"/>
    <property type="evidence" value="ECO:0007669"/>
    <property type="project" value="Ensembl"/>
</dbReference>
<dbReference type="GO" id="GO:1990407">
    <property type="term" value="F:calcitonin gene-related peptide binding"/>
    <property type="evidence" value="ECO:0007669"/>
    <property type="project" value="Ensembl"/>
</dbReference>
<dbReference type="GO" id="GO:0001635">
    <property type="term" value="F:calcitonin gene-related peptide receptor activity"/>
    <property type="evidence" value="ECO:0007669"/>
    <property type="project" value="Ensembl"/>
</dbReference>
<dbReference type="GO" id="GO:0015026">
    <property type="term" value="F:coreceptor activity"/>
    <property type="evidence" value="ECO:0007669"/>
    <property type="project" value="Ensembl"/>
</dbReference>
<dbReference type="GO" id="GO:0007189">
    <property type="term" value="P:adenylate cyclase-activating G protein-coupled receptor signaling pathway"/>
    <property type="evidence" value="ECO:0007669"/>
    <property type="project" value="Ensembl"/>
</dbReference>
<dbReference type="GO" id="GO:0150059">
    <property type="term" value="P:amylin receptor 1 signaling pathway"/>
    <property type="evidence" value="ECO:0007669"/>
    <property type="project" value="Ensembl"/>
</dbReference>
<dbReference type="GO" id="GO:0001525">
    <property type="term" value="P:angiogenesis"/>
    <property type="evidence" value="ECO:0007669"/>
    <property type="project" value="Ensembl"/>
</dbReference>
<dbReference type="GO" id="GO:1990408">
    <property type="term" value="P:calcitonin gene-related peptide receptor signaling pathway"/>
    <property type="evidence" value="ECO:0007669"/>
    <property type="project" value="Ensembl"/>
</dbReference>
<dbReference type="GO" id="GO:0006816">
    <property type="term" value="P:calcium ion transport"/>
    <property type="evidence" value="ECO:0007669"/>
    <property type="project" value="Ensembl"/>
</dbReference>
<dbReference type="GO" id="GO:0032870">
    <property type="term" value="P:cellular response to hormone stimulus"/>
    <property type="evidence" value="ECO:0007669"/>
    <property type="project" value="TreeGrafter"/>
</dbReference>
<dbReference type="GO" id="GO:0006886">
    <property type="term" value="P:intracellular protein transport"/>
    <property type="evidence" value="ECO:0007669"/>
    <property type="project" value="InterPro"/>
</dbReference>
<dbReference type="GO" id="GO:0060050">
    <property type="term" value="P:positive regulation of protein glycosylation"/>
    <property type="evidence" value="ECO:0007669"/>
    <property type="project" value="Ensembl"/>
</dbReference>
<dbReference type="GO" id="GO:0072659">
    <property type="term" value="P:protein localization to plasma membrane"/>
    <property type="evidence" value="ECO:0007669"/>
    <property type="project" value="Ensembl"/>
</dbReference>
<dbReference type="GO" id="GO:0031623">
    <property type="term" value="P:receptor internalization"/>
    <property type="evidence" value="ECO:0007669"/>
    <property type="project" value="Ensembl"/>
</dbReference>
<dbReference type="GO" id="GO:0008277">
    <property type="term" value="P:regulation of G protein-coupled receptor signaling pathway"/>
    <property type="evidence" value="ECO:0007669"/>
    <property type="project" value="InterPro"/>
</dbReference>
<dbReference type="FunFam" id="1.10.150.510:FF:000002">
    <property type="entry name" value="Receptor activity-modifying protein 1"/>
    <property type="match status" value="1"/>
</dbReference>
<dbReference type="Gene3D" id="1.10.150.510">
    <property type="entry name" value="Receptor activity modifying family"/>
    <property type="match status" value="1"/>
</dbReference>
<dbReference type="InterPro" id="IPR006985">
    <property type="entry name" value="RAMP"/>
</dbReference>
<dbReference type="InterPro" id="IPR038126">
    <property type="entry name" value="RAMP_sf"/>
</dbReference>
<dbReference type="PANTHER" id="PTHR14076">
    <property type="entry name" value="RECEPTOR ACTIVITY MODIFYING PROTEIN RAMP"/>
    <property type="match status" value="1"/>
</dbReference>
<dbReference type="PANTHER" id="PTHR14076:SF3">
    <property type="entry name" value="RECEPTOR ACTIVITY-MODIFYING PROTEIN 1"/>
    <property type="match status" value="1"/>
</dbReference>
<dbReference type="Pfam" id="PF04901">
    <property type="entry name" value="RAMP"/>
    <property type="match status" value="1"/>
</dbReference>
<organism>
    <name type="scientific">Cavia porcellus</name>
    <name type="common">Guinea pig</name>
    <dbReference type="NCBI Taxonomy" id="10141"/>
    <lineage>
        <taxon>Eukaryota</taxon>
        <taxon>Metazoa</taxon>
        <taxon>Chordata</taxon>
        <taxon>Craniata</taxon>
        <taxon>Vertebrata</taxon>
        <taxon>Euteleostomi</taxon>
        <taxon>Mammalia</taxon>
        <taxon>Eutheria</taxon>
        <taxon>Euarchontoglires</taxon>
        <taxon>Glires</taxon>
        <taxon>Rodentia</taxon>
        <taxon>Hystricomorpha</taxon>
        <taxon>Caviidae</taxon>
        <taxon>Cavia</taxon>
    </lineage>
</organism>
<protein>
    <recommendedName>
        <fullName>Receptor activity-modifying protein 1</fullName>
    </recommendedName>
</protein>
<name>RAMP1_CAVPO</name>
<comment type="function">
    <text evidence="1">Accessory protein that interacts with and modulates the function of G-protein coupled receptors including calcitonin gene-related peptide type 1 receptor (CALCRL) and calcitonin receptor (CALCR). Required for the transport of CALCRL to the plasma membrane. Together with CALCRL, form the receptor complex for the calcitonin gene-related peptides CGRP1/CALCA and CGRP2/CALCB. Together with CALCR, form the AMYR1 receptor complex for amylin/IAPP and CGRP1/CALCA.</text>
</comment>
<comment type="subunit">
    <text evidence="1">Heterodimer of CALCRL and RAMP1; the interaction induces allosteric modulation of CALCRL function and CGRP1/CALCA and CGRP2/CALCB ligand specificity. Heterodimer of CALCR and RAMP1; interaction forms the AMYR1 receptor complex for amylin/IAPP and CGRP1/CALCA ligands.</text>
</comment>
<comment type="subcellular location">
    <subcellularLocation>
        <location evidence="1">Cell membrane</location>
        <topology evidence="1">Single-pass type I membrane protein</topology>
    </subcellularLocation>
</comment>
<comment type="similarity">
    <text evidence="3">Belongs to the RAMP family.</text>
</comment>
<accession>Q8R4C6</accession>
<evidence type="ECO:0000250" key="1">
    <source>
        <dbReference type="UniProtKB" id="O60894"/>
    </source>
</evidence>
<evidence type="ECO:0000255" key="2"/>
<evidence type="ECO:0000305" key="3"/>
<gene>
    <name type="primary">RAMP1</name>
</gene>
<sequence length="148" mass="16942">MVRVLRGLPWRGLWLLLAHQLFLVTACQDAHYGTLMQELCLSRFQKDMEAMERTLWCDWGKTIGSYGELTDCTRNLAERLGCFWPNVEVDRFFVAVHRHYFRSCPASGRALGDPPSTILCPFVVLPITVTLLVTALVVWRSKRAESIV</sequence>
<feature type="signal peptide" evidence="2">
    <location>
        <begin position="1"/>
        <end position="26"/>
    </location>
</feature>
<feature type="chain" id="PRO_0000030167" description="Receptor activity-modifying protein 1">
    <location>
        <begin position="27"/>
        <end position="148"/>
    </location>
</feature>
<feature type="topological domain" description="Extracellular" evidence="2">
    <location>
        <begin position="27"/>
        <end position="118"/>
    </location>
</feature>
<feature type="transmembrane region" description="Helical" evidence="1">
    <location>
        <begin position="119"/>
        <end position="140"/>
    </location>
</feature>
<feature type="topological domain" description="Cytoplasmic" evidence="2">
    <location>
        <begin position="141"/>
        <end position="148"/>
    </location>
</feature>
<feature type="disulfide bond">
    <location>
        <begin position="27"/>
        <end position="82"/>
    </location>
</feature>
<feature type="disulfide bond" evidence="1">
    <location>
        <begin position="40"/>
        <end position="72"/>
    </location>
</feature>
<feature type="disulfide bond" evidence="1">
    <location>
        <begin position="57"/>
        <end position="104"/>
    </location>
</feature>